<reference key="1">
    <citation type="journal article" date="2003" name="DNA Res.">
        <title>Complete genome structure of Gloeobacter violaceus PCC 7421, a cyanobacterium that lacks thylakoids.</title>
        <authorList>
            <person name="Nakamura Y."/>
            <person name="Kaneko T."/>
            <person name="Sato S."/>
            <person name="Mimuro M."/>
            <person name="Miyashita H."/>
            <person name="Tsuchiya T."/>
            <person name="Sasamoto S."/>
            <person name="Watanabe A."/>
            <person name="Kawashima K."/>
            <person name="Kishida Y."/>
            <person name="Kiyokawa C."/>
            <person name="Kohara M."/>
            <person name="Matsumoto M."/>
            <person name="Matsuno A."/>
            <person name="Nakazaki N."/>
            <person name="Shimpo S."/>
            <person name="Takeuchi C."/>
            <person name="Yamada M."/>
            <person name="Tabata S."/>
        </authorList>
    </citation>
    <scope>NUCLEOTIDE SEQUENCE [LARGE SCALE GENOMIC DNA]</scope>
    <source>
        <strain>ATCC 29082 / PCC 7421</strain>
    </source>
</reference>
<organism>
    <name type="scientific">Gloeobacter violaceus (strain ATCC 29082 / PCC 7421)</name>
    <dbReference type="NCBI Taxonomy" id="251221"/>
    <lineage>
        <taxon>Bacteria</taxon>
        <taxon>Bacillati</taxon>
        <taxon>Cyanobacteriota</taxon>
        <taxon>Cyanophyceae</taxon>
        <taxon>Gloeobacterales</taxon>
        <taxon>Gloeobacteraceae</taxon>
        <taxon>Gloeobacter</taxon>
    </lineage>
</organism>
<comment type="function">
    <text evidence="1">The RecF protein is involved in DNA metabolism; it is required for DNA replication and normal SOS inducibility. RecF binds preferentially to single-stranded, linear DNA. It also seems to bind ATP.</text>
</comment>
<comment type="subcellular location">
    <subcellularLocation>
        <location evidence="1">Cytoplasm</location>
    </subcellularLocation>
</comment>
<comment type="similarity">
    <text evidence="1">Belongs to the RecF family.</text>
</comment>
<protein>
    <recommendedName>
        <fullName evidence="1">DNA replication and repair protein RecF</fullName>
    </recommendedName>
</protein>
<keyword id="KW-0067">ATP-binding</keyword>
<keyword id="KW-0963">Cytoplasm</keyword>
<keyword id="KW-0227">DNA damage</keyword>
<keyword id="KW-0234">DNA repair</keyword>
<keyword id="KW-0235">DNA replication</keyword>
<keyword id="KW-0238">DNA-binding</keyword>
<keyword id="KW-0547">Nucleotide-binding</keyword>
<keyword id="KW-1185">Reference proteome</keyword>
<keyword id="KW-0742">SOS response</keyword>
<proteinExistence type="inferred from homology"/>
<sequence length="375" mass="42091">MFLRSVQLHDFRNYAEADLELTSPKTILVGDNAQGKSNLLEAVQLLATGRSTRALRDRELIARGKEQARVAATVERLGDTVELEMILRAGKRRTVRVGGETRRTQVEALGYLHCVSFSSLDLDLVRGAPETRRDWLDGILLQLEPVYTNVLAQFVQALHQRNALLRSTELSPDALAEQLPCWDDLLVRAATPVMRRRHRLIERLAPLARRWHGSISGGRETFAVRYQPQISFEQEDAQSVQQALQELLKEKRTLEGRRGTSLVGPHRDEVDLSIDEIPARQFGSQGQQRTLVLALKLAELELLEQVTGEVPLLLLDDVLAELDLHRQDQLLGAIQERVQTIVTTTHLSLFDSQWLQSATVLTIEKGRIGSPPAPA</sequence>
<accession>Q7NHY0</accession>
<dbReference type="EMBL" id="BA000045">
    <property type="protein sequence ID" value="BAC90346.1"/>
    <property type="molecule type" value="Genomic_DNA"/>
</dbReference>
<dbReference type="RefSeq" id="NP_925351.1">
    <property type="nucleotide sequence ID" value="NC_005125.1"/>
</dbReference>
<dbReference type="RefSeq" id="WP_011142400.1">
    <property type="nucleotide sequence ID" value="NC_005125.1"/>
</dbReference>
<dbReference type="SMR" id="Q7NHY0"/>
<dbReference type="FunCoup" id="Q7NHY0">
    <property type="interactions" value="16"/>
</dbReference>
<dbReference type="STRING" id="251221.gene:10759902"/>
<dbReference type="EnsemblBacteria" id="BAC90346">
    <property type="protein sequence ID" value="BAC90346"/>
    <property type="gene ID" value="BAC90346"/>
</dbReference>
<dbReference type="KEGG" id="gvi:gll2405"/>
<dbReference type="PATRIC" id="fig|251221.4.peg.2443"/>
<dbReference type="eggNOG" id="COG1195">
    <property type="taxonomic scope" value="Bacteria"/>
</dbReference>
<dbReference type="HOGENOM" id="CLU_040267_1_1_3"/>
<dbReference type="InParanoid" id="Q7NHY0"/>
<dbReference type="OrthoDB" id="9803889at2"/>
<dbReference type="PhylomeDB" id="Q7NHY0"/>
<dbReference type="Proteomes" id="UP000000557">
    <property type="component" value="Chromosome"/>
</dbReference>
<dbReference type="GO" id="GO:0005737">
    <property type="term" value="C:cytoplasm"/>
    <property type="evidence" value="ECO:0007669"/>
    <property type="project" value="UniProtKB-SubCell"/>
</dbReference>
<dbReference type="GO" id="GO:0005524">
    <property type="term" value="F:ATP binding"/>
    <property type="evidence" value="ECO:0007669"/>
    <property type="project" value="UniProtKB-UniRule"/>
</dbReference>
<dbReference type="GO" id="GO:0003697">
    <property type="term" value="F:single-stranded DNA binding"/>
    <property type="evidence" value="ECO:0007669"/>
    <property type="project" value="UniProtKB-UniRule"/>
</dbReference>
<dbReference type="GO" id="GO:0006260">
    <property type="term" value="P:DNA replication"/>
    <property type="evidence" value="ECO:0007669"/>
    <property type="project" value="UniProtKB-UniRule"/>
</dbReference>
<dbReference type="GO" id="GO:0000731">
    <property type="term" value="P:DNA synthesis involved in DNA repair"/>
    <property type="evidence" value="ECO:0000318"/>
    <property type="project" value="GO_Central"/>
</dbReference>
<dbReference type="GO" id="GO:0006302">
    <property type="term" value="P:double-strand break repair"/>
    <property type="evidence" value="ECO:0000318"/>
    <property type="project" value="GO_Central"/>
</dbReference>
<dbReference type="GO" id="GO:0009432">
    <property type="term" value="P:SOS response"/>
    <property type="evidence" value="ECO:0007669"/>
    <property type="project" value="UniProtKB-UniRule"/>
</dbReference>
<dbReference type="Gene3D" id="3.40.50.300">
    <property type="entry name" value="P-loop containing nucleotide triphosphate hydrolases"/>
    <property type="match status" value="1"/>
</dbReference>
<dbReference type="Gene3D" id="1.20.1050.90">
    <property type="entry name" value="RecF/RecN/SMC, N-terminal domain"/>
    <property type="match status" value="1"/>
</dbReference>
<dbReference type="HAMAP" id="MF_00365">
    <property type="entry name" value="RecF"/>
    <property type="match status" value="1"/>
</dbReference>
<dbReference type="InterPro" id="IPR001238">
    <property type="entry name" value="DNA-binding_RecF"/>
</dbReference>
<dbReference type="InterPro" id="IPR018078">
    <property type="entry name" value="DNA-binding_RecF_CS"/>
</dbReference>
<dbReference type="InterPro" id="IPR027417">
    <property type="entry name" value="P-loop_NTPase"/>
</dbReference>
<dbReference type="InterPro" id="IPR003395">
    <property type="entry name" value="RecF/RecN/SMC_N"/>
</dbReference>
<dbReference type="InterPro" id="IPR042174">
    <property type="entry name" value="RecF_2"/>
</dbReference>
<dbReference type="NCBIfam" id="TIGR00611">
    <property type="entry name" value="recf"/>
    <property type="match status" value="1"/>
</dbReference>
<dbReference type="PANTHER" id="PTHR32182">
    <property type="entry name" value="DNA REPLICATION AND REPAIR PROTEIN RECF"/>
    <property type="match status" value="1"/>
</dbReference>
<dbReference type="PANTHER" id="PTHR32182:SF0">
    <property type="entry name" value="DNA REPLICATION AND REPAIR PROTEIN RECF"/>
    <property type="match status" value="1"/>
</dbReference>
<dbReference type="Pfam" id="PF02463">
    <property type="entry name" value="SMC_N"/>
    <property type="match status" value="1"/>
</dbReference>
<dbReference type="SUPFAM" id="SSF52540">
    <property type="entry name" value="P-loop containing nucleoside triphosphate hydrolases"/>
    <property type="match status" value="1"/>
</dbReference>
<dbReference type="PROSITE" id="PS00617">
    <property type="entry name" value="RECF_1"/>
    <property type="match status" value="1"/>
</dbReference>
<dbReference type="PROSITE" id="PS00618">
    <property type="entry name" value="RECF_2"/>
    <property type="match status" value="1"/>
</dbReference>
<name>RECF_GLOVI</name>
<gene>
    <name evidence="1" type="primary">recF</name>
    <name type="ordered locus">gll2405</name>
</gene>
<evidence type="ECO:0000255" key="1">
    <source>
        <dbReference type="HAMAP-Rule" id="MF_00365"/>
    </source>
</evidence>
<feature type="chain" id="PRO_0000196418" description="DNA replication and repair protein RecF">
    <location>
        <begin position="1"/>
        <end position="375"/>
    </location>
</feature>
<feature type="binding site" evidence="1">
    <location>
        <begin position="30"/>
        <end position="37"/>
    </location>
    <ligand>
        <name>ATP</name>
        <dbReference type="ChEBI" id="CHEBI:30616"/>
    </ligand>
</feature>